<comment type="function">
    <text evidence="1">NDH-1 shuttles electrons from NADH, via FMN and iron-sulfur (Fe-S) centers, to quinones in the respiratory chain. The immediate electron acceptor for the enzyme in this species is believed to be ubiquinone. Couples the redox reaction to proton translocation (for every two electrons transferred, four hydrogen ions are translocated across the cytoplasmic membrane), and thus conserves the redox energy in a proton gradient.</text>
</comment>
<comment type="catalytic activity">
    <reaction evidence="1">
        <text>a quinone + NADH + 5 H(+)(in) = a quinol + NAD(+) + 4 H(+)(out)</text>
        <dbReference type="Rhea" id="RHEA:57888"/>
        <dbReference type="ChEBI" id="CHEBI:15378"/>
        <dbReference type="ChEBI" id="CHEBI:24646"/>
        <dbReference type="ChEBI" id="CHEBI:57540"/>
        <dbReference type="ChEBI" id="CHEBI:57945"/>
        <dbReference type="ChEBI" id="CHEBI:132124"/>
    </reaction>
</comment>
<comment type="subunit">
    <text evidence="1">NDH-1 is composed of 14 different subunits. Subunits NuoB, C, D, E, F, and G constitute the peripheral sector of the complex.</text>
</comment>
<comment type="subcellular location">
    <subcellularLocation>
        <location evidence="1">Cell inner membrane</location>
        <topology evidence="1">Peripheral membrane protein</topology>
        <orientation evidence="1">Cytoplasmic side</orientation>
    </subcellularLocation>
</comment>
<comment type="similarity">
    <text evidence="1">Belongs to the complex I 30 kDa subunit family.</text>
</comment>
<name>NUOC_VEREI</name>
<gene>
    <name evidence="1" type="primary">nuoC</name>
    <name type="ordered locus">Veis_2811</name>
</gene>
<dbReference type="EC" id="7.1.1.-" evidence="1"/>
<dbReference type="EMBL" id="CP000542">
    <property type="protein sequence ID" value="ABM58549.1"/>
    <property type="molecule type" value="Genomic_DNA"/>
</dbReference>
<dbReference type="SMR" id="A1WLP2"/>
<dbReference type="STRING" id="391735.Veis_2811"/>
<dbReference type="KEGG" id="vei:Veis_2811"/>
<dbReference type="eggNOG" id="COG0852">
    <property type="taxonomic scope" value="Bacteria"/>
</dbReference>
<dbReference type="HOGENOM" id="CLU_042628_2_1_4"/>
<dbReference type="Proteomes" id="UP000000374">
    <property type="component" value="Chromosome"/>
</dbReference>
<dbReference type="GO" id="GO:0005886">
    <property type="term" value="C:plasma membrane"/>
    <property type="evidence" value="ECO:0007669"/>
    <property type="project" value="UniProtKB-SubCell"/>
</dbReference>
<dbReference type="GO" id="GO:0008137">
    <property type="term" value="F:NADH dehydrogenase (ubiquinone) activity"/>
    <property type="evidence" value="ECO:0007669"/>
    <property type="project" value="InterPro"/>
</dbReference>
<dbReference type="GO" id="GO:0050136">
    <property type="term" value="F:NADH:ubiquinone reductase (non-electrogenic) activity"/>
    <property type="evidence" value="ECO:0007669"/>
    <property type="project" value="UniProtKB-UniRule"/>
</dbReference>
<dbReference type="GO" id="GO:0048038">
    <property type="term" value="F:quinone binding"/>
    <property type="evidence" value="ECO:0007669"/>
    <property type="project" value="UniProtKB-KW"/>
</dbReference>
<dbReference type="Gene3D" id="3.30.460.80">
    <property type="entry name" value="NADH:ubiquinone oxidoreductase, 30kDa subunit"/>
    <property type="match status" value="1"/>
</dbReference>
<dbReference type="HAMAP" id="MF_01357">
    <property type="entry name" value="NDH1_NuoC"/>
    <property type="match status" value="1"/>
</dbReference>
<dbReference type="InterPro" id="IPR010218">
    <property type="entry name" value="NADH_DH_suC"/>
</dbReference>
<dbReference type="InterPro" id="IPR037232">
    <property type="entry name" value="NADH_quin_OxRdtase_su_C/D-like"/>
</dbReference>
<dbReference type="InterPro" id="IPR001268">
    <property type="entry name" value="NADH_UbQ_OxRdtase_30kDa_su"/>
</dbReference>
<dbReference type="InterPro" id="IPR020396">
    <property type="entry name" value="NADH_UbQ_OxRdtase_CS"/>
</dbReference>
<dbReference type="NCBIfam" id="TIGR01961">
    <property type="entry name" value="NuoC_fam"/>
    <property type="match status" value="1"/>
</dbReference>
<dbReference type="NCBIfam" id="NF004730">
    <property type="entry name" value="PRK06074.1-1"/>
    <property type="match status" value="1"/>
</dbReference>
<dbReference type="PANTHER" id="PTHR10884:SF14">
    <property type="entry name" value="NADH DEHYDROGENASE [UBIQUINONE] IRON-SULFUR PROTEIN 3, MITOCHONDRIAL"/>
    <property type="match status" value="1"/>
</dbReference>
<dbReference type="PANTHER" id="PTHR10884">
    <property type="entry name" value="NADH DEHYDROGENASE UBIQUINONE IRON-SULFUR PROTEIN 3"/>
    <property type="match status" value="1"/>
</dbReference>
<dbReference type="Pfam" id="PF00329">
    <property type="entry name" value="Complex1_30kDa"/>
    <property type="match status" value="1"/>
</dbReference>
<dbReference type="SUPFAM" id="SSF143243">
    <property type="entry name" value="Nqo5-like"/>
    <property type="match status" value="1"/>
</dbReference>
<dbReference type="PROSITE" id="PS00542">
    <property type="entry name" value="COMPLEX1_30K"/>
    <property type="match status" value="1"/>
</dbReference>
<sequence>MMTAVAIRPERLRDHIAAALGARLRQITLALEEVTVVLAAADYFDAMRVLRDDPVCRFEQLIDLCAVDYSTYADAVQQGPRYCVVAHLLSVSLNQRLRVKVFCPDDDFPLLPSVCGLWNSANWYEREAFDLFGILFDGHDDLRRILTDYGFIGHPFRKDFPLSGHVQMRYDAELRRVVYEPVSIEPREITPRIIREDHYADPH</sequence>
<reference key="1">
    <citation type="submission" date="2006-12" db="EMBL/GenBank/DDBJ databases">
        <title>Complete sequence of chromosome 1 of Verminephrobacter eiseniae EF01-2.</title>
        <authorList>
            <person name="Copeland A."/>
            <person name="Lucas S."/>
            <person name="Lapidus A."/>
            <person name="Barry K."/>
            <person name="Detter J.C."/>
            <person name="Glavina del Rio T."/>
            <person name="Dalin E."/>
            <person name="Tice H."/>
            <person name="Pitluck S."/>
            <person name="Chertkov O."/>
            <person name="Brettin T."/>
            <person name="Bruce D."/>
            <person name="Han C."/>
            <person name="Tapia R."/>
            <person name="Gilna P."/>
            <person name="Schmutz J."/>
            <person name="Larimer F."/>
            <person name="Land M."/>
            <person name="Hauser L."/>
            <person name="Kyrpides N."/>
            <person name="Kim E."/>
            <person name="Stahl D."/>
            <person name="Richardson P."/>
        </authorList>
    </citation>
    <scope>NUCLEOTIDE SEQUENCE [LARGE SCALE GENOMIC DNA]</scope>
    <source>
        <strain>EF01-2</strain>
    </source>
</reference>
<protein>
    <recommendedName>
        <fullName evidence="1">NADH-quinone oxidoreductase subunit C</fullName>
        <ecNumber evidence="1">7.1.1.-</ecNumber>
    </recommendedName>
    <alternativeName>
        <fullName evidence="1">NADH dehydrogenase I subunit C</fullName>
    </alternativeName>
    <alternativeName>
        <fullName evidence="1">NDH-1 subunit C</fullName>
    </alternativeName>
</protein>
<feature type="chain" id="PRO_0000358219" description="NADH-quinone oxidoreductase subunit C">
    <location>
        <begin position="1"/>
        <end position="203"/>
    </location>
</feature>
<keyword id="KW-0997">Cell inner membrane</keyword>
<keyword id="KW-1003">Cell membrane</keyword>
<keyword id="KW-0472">Membrane</keyword>
<keyword id="KW-0520">NAD</keyword>
<keyword id="KW-0874">Quinone</keyword>
<keyword id="KW-1185">Reference proteome</keyword>
<keyword id="KW-1278">Translocase</keyword>
<keyword id="KW-0813">Transport</keyword>
<keyword id="KW-0830">Ubiquinone</keyword>
<accession>A1WLP2</accession>
<evidence type="ECO:0000255" key="1">
    <source>
        <dbReference type="HAMAP-Rule" id="MF_01357"/>
    </source>
</evidence>
<proteinExistence type="inferred from homology"/>
<organism>
    <name type="scientific">Verminephrobacter eiseniae (strain EF01-2)</name>
    <dbReference type="NCBI Taxonomy" id="391735"/>
    <lineage>
        <taxon>Bacteria</taxon>
        <taxon>Pseudomonadati</taxon>
        <taxon>Pseudomonadota</taxon>
        <taxon>Betaproteobacteria</taxon>
        <taxon>Burkholderiales</taxon>
        <taxon>Comamonadaceae</taxon>
        <taxon>Verminephrobacter</taxon>
    </lineage>
</organism>